<reference key="1">
    <citation type="journal article" date="2001" name="Science">
        <title>Comparative genomics of Listeria species.</title>
        <authorList>
            <person name="Glaser P."/>
            <person name="Frangeul L."/>
            <person name="Buchrieser C."/>
            <person name="Rusniok C."/>
            <person name="Amend A."/>
            <person name="Baquero F."/>
            <person name="Berche P."/>
            <person name="Bloecker H."/>
            <person name="Brandt P."/>
            <person name="Chakraborty T."/>
            <person name="Charbit A."/>
            <person name="Chetouani F."/>
            <person name="Couve E."/>
            <person name="de Daruvar A."/>
            <person name="Dehoux P."/>
            <person name="Domann E."/>
            <person name="Dominguez-Bernal G."/>
            <person name="Duchaud E."/>
            <person name="Durant L."/>
            <person name="Dussurget O."/>
            <person name="Entian K.-D."/>
            <person name="Fsihi H."/>
            <person name="Garcia-del Portillo F."/>
            <person name="Garrido P."/>
            <person name="Gautier L."/>
            <person name="Goebel W."/>
            <person name="Gomez-Lopez N."/>
            <person name="Hain T."/>
            <person name="Hauf J."/>
            <person name="Jackson D."/>
            <person name="Jones L.-M."/>
            <person name="Kaerst U."/>
            <person name="Kreft J."/>
            <person name="Kuhn M."/>
            <person name="Kunst F."/>
            <person name="Kurapkat G."/>
            <person name="Madueno E."/>
            <person name="Maitournam A."/>
            <person name="Mata Vicente J."/>
            <person name="Ng E."/>
            <person name="Nedjari H."/>
            <person name="Nordsiek G."/>
            <person name="Novella S."/>
            <person name="de Pablos B."/>
            <person name="Perez-Diaz J.-C."/>
            <person name="Purcell R."/>
            <person name="Remmel B."/>
            <person name="Rose M."/>
            <person name="Schlueter T."/>
            <person name="Simoes N."/>
            <person name="Tierrez A."/>
            <person name="Vazquez-Boland J.-A."/>
            <person name="Voss H."/>
            <person name="Wehland J."/>
            <person name="Cossart P."/>
        </authorList>
    </citation>
    <scope>NUCLEOTIDE SEQUENCE [LARGE SCALE GENOMIC DNA]</scope>
    <source>
        <strain>ATCC BAA-680 / CLIP 11262</strain>
    </source>
</reference>
<proteinExistence type="inferred from homology"/>
<keyword id="KW-0028">Amino-acid biosynthesis</keyword>
<keyword id="KW-0067">ATP-binding</keyword>
<keyword id="KW-0963">Cytoplasm</keyword>
<keyword id="KW-0418">Kinase</keyword>
<keyword id="KW-0547">Nucleotide-binding</keyword>
<keyword id="KW-0791">Threonine biosynthesis</keyword>
<keyword id="KW-0808">Transferase</keyword>
<comment type="function">
    <text evidence="1">Catalyzes the ATP-dependent phosphorylation of L-homoserine to L-homoserine phosphate.</text>
</comment>
<comment type="catalytic activity">
    <reaction evidence="1">
        <text>L-homoserine + ATP = O-phospho-L-homoserine + ADP + H(+)</text>
        <dbReference type="Rhea" id="RHEA:13985"/>
        <dbReference type="ChEBI" id="CHEBI:15378"/>
        <dbReference type="ChEBI" id="CHEBI:30616"/>
        <dbReference type="ChEBI" id="CHEBI:57476"/>
        <dbReference type="ChEBI" id="CHEBI:57590"/>
        <dbReference type="ChEBI" id="CHEBI:456216"/>
        <dbReference type="EC" id="2.7.1.39"/>
    </reaction>
</comment>
<comment type="pathway">
    <text evidence="1">Amino-acid biosynthesis; L-threonine biosynthesis; L-threonine from L-aspartate: step 4/5.</text>
</comment>
<comment type="subcellular location">
    <subcellularLocation>
        <location evidence="1">Cytoplasm</location>
    </subcellularLocation>
</comment>
<comment type="similarity">
    <text evidence="1">Belongs to the GHMP kinase family. Homoserine kinase subfamily.</text>
</comment>
<dbReference type="EC" id="2.7.1.39" evidence="1"/>
<dbReference type="EMBL" id="AL596173">
    <property type="protein sequence ID" value="CAC97915.1"/>
    <property type="molecule type" value="Genomic_DNA"/>
</dbReference>
<dbReference type="PIR" id="AC1768">
    <property type="entry name" value="AC1768"/>
</dbReference>
<dbReference type="RefSeq" id="WP_003772274.1">
    <property type="nucleotide sequence ID" value="NC_003212.1"/>
</dbReference>
<dbReference type="SMR" id="Q927U8"/>
<dbReference type="STRING" id="272626.gene:17567069"/>
<dbReference type="KEGG" id="lin:thrB"/>
<dbReference type="eggNOG" id="COG0083">
    <property type="taxonomic scope" value="Bacteria"/>
</dbReference>
<dbReference type="HOGENOM" id="CLU_041243_0_0_9"/>
<dbReference type="OrthoDB" id="9769912at2"/>
<dbReference type="UniPathway" id="UPA00050">
    <property type="reaction ID" value="UER00064"/>
</dbReference>
<dbReference type="Proteomes" id="UP000002513">
    <property type="component" value="Chromosome"/>
</dbReference>
<dbReference type="GO" id="GO:0005737">
    <property type="term" value="C:cytoplasm"/>
    <property type="evidence" value="ECO:0007669"/>
    <property type="project" value="UniProtKB-SubCell"/>
</dbReference>
<dbReference type="GO" id="GO:0005524">
    <property type="term" value="F:ATP binding"/>
    <property type="evidence" value="ECO:0007669"/>
    <property type="project" value="UniProtKB-UniRule"/>
</dbReference>
<dbReference type="GO" id="GO:0004413">
    <property type="term" value="F:homoserine kinase activity"/>
    <property type="evidence" value="ECO:0007669"/>
    <property type="project" value="UniProtKB-UniRule"/>
</dbReference>
<dbReference type="GO" id="GO:0009088">
    <property type="term" value="P:threonine biosynthetic process"/>
    <property type="evidence" value="ECO:0007669"/>
    <property type="project" value="UniProtKB-UniRule"/>
</dbReference>
<dbReference type="Gene3D" id="3.30.230.10">
    <property type="match status" value="1"/>
</dbReference>
<dbReference type="Gene3D" id="3.30.70.890">
    <property type="entry name" value="GHMP kinase, C-terminal domain"/>
    <property type="match status" value="1"/>
</dbReference>
<dbReference type="HAMAP" id="MF_00384">
    <property type="entry name" value="Homoser_kinase"/>
    <property type="match status" value="1"/>
</dbReference>
<dbReference type="InterPro" id="IPR013750">
    <property type="entry name" value="GHMP_kinase_C_dom"/>
</dbReference>
<dbReference type="InterPro" id="IPR036554">
    <property type="entry name" value="GHMP_kinase_C_sf"/>
</dbReference>
<dbReference type="InterPro" id="IPR006204">
    <property type="entry name" value="GHMP_kinase_N_dom"/>
</dbReference>
<dbReference type="InterPro" id="IPR006203">
    <property type="entry name" value="GHMP_knse_ATP-bd_CS"/>
</dbReference>
<dbReference type="InterPro" id="IPR000870">
    <property type="entry name" value="Homoserine_kinase"/>
</dbReference>
<dbReference type="InterPro" id="IPR020568">
    <property type="entry name" value="Ribosomal_Su5_D2-typ_SF"/>
</dbReference>
<dbReference type="InterPro" id="IPR014721">
    <property type="entry name" value="Ribsml_uS5_D2-typ_fold_subgr"/>
</dbReference>
<dbReference type="NCBIfam" id="TIGR00191">
    <property type="entry name" value="thrB"/>
    <property type="match status" value="1"/>
</dbReference>
<dbReference type="PANTHER" id="PTHR20861:SF1">
    <property type="entry name" value="HOMOSERINE KINASE"/>
    <property type="match status" value="1"/>
</dbReference>
<dbReference type="PANTHER" id="PTHR20861">
    <property type="entry name" value="HOMOSERINE/4-DIPHOSPHOCYTIDYL-2-C-METHYL-D-ERYTHRITOL KINASE"/>
    <property type="match status" value="1"/>
</dbReference>
<dbReference type="Pfam" id="PF08544">
    <property type="entry name" value="GHMP_kinases_C"/>
    <property type="match status" value="1"/>
</dbReference>
<dbReference type="Pfam" id="PF00288">
    <property type="entry name" value="GHMP_kinases_N"/>
    <property type="match status" value="1"/>
</dbReference>
<dbReference type="PIRSF" id="PIRSF000676">
    <property type="entry name" value="Homoser_kin"/>
    <property type="match status" value="1"/>
</dbReference>
<dbReference type="PRINTS" id="PR00958">
    <property type="entry name" value="HOMSERKINASE"/>
</dbReference>
<dbReference type="SUPFAM" id="SSF55060">
    <property type="entry name" value="GHMP Kinase, C-terminal domain"/>
    <property type="match status" value="1"/>
</dbReference>
<dbReference type="SUPFAM" id="SSF54211">
    <property type="entry name" value="Ribosomal protein S5 domain 2-like"/>
    <property type="match status" value="1"/>
</dbReference>
<dbReference type="PROSITE" id="PS00627">
    <property type="entry name" value="GHMP_KINASES_ATP"/>
    <property type="match status" value="1"/>
</dbReference>
<feature type="chain" id="PRO_0000156582" description="Homoserine kinase">
    <location>
        <begin position="1"/>
        <end position="288"/>
    </location>
</feature>
<feature type="binding site" evidence="1">
    <location>
        <begin position="79"/>
        <end position="89"/>
    </location>
    <ligand>
        <name>ATP</name>
        <dbReference type="ChEBI" id="CHEBI:30616"/>
    </ligand>
</feature>
<evidence type="ECO:0000255" key="1">
    <source>
        <dbReference type="HAMAP-Rule" id="MF_00384"/>
    </source>
</evidence>
<accession>Q927U8</accession>
<name>KHSE_LISIN</name>
<gene>
    <name evidence="1" type="primary">thrB</name>
    <name type="ordered locus">lin2689</name>
</gene>
<organism>
    <name type="scientific">Listeria innocua serovar 6a (strain ATCC BAA-680 / CLIP 11262)</name>
    <dbReference type="NCBI Taxonomy" id="272626"/>
    <lineage>
        <taxon>Bacteria</taxon>
        <taxon>Bacillati</taxon>
        <taxon>Bacillota</taxon>
        <taxon>Bacilli</taxon>
        <taxon>Bacillales</taxon>
        <taxon>Listeriaceae</taxon>
        <taxon>Listeria</taxon>
    </lineage>
</organism>
<protein>
    <recommendedName>
        <fullName evidence="1">Homoserine kinase</fullName>
        <shortName evidence="1">HK</shortName>
        <shortName evidence="1">HSK</shortName>
        <ecNumber evidence="1">2.7.1.39</ecNumber>
    </recommendedName>
</protein>
<sequence>MRIRVPATTANLGPGFDSCGLALTLYLTLDIGEKADSWYIEHNIGGGIPHDETNVIIETALNLAPNLTPHHLVMTCDIPPARGLGSSSAAVVAGIELANTLAELNLSKEEKVRIAAEIEGHPDNVAPAVLGNWVVGAKLDGEDFYVRHLFPDCALIAFIPKAELLTSESRGVLPETLPFKEAVKASSIANVMIAAILRNDMTLAGEMMERDLWHEKYRSKLVPHLTQIREVAKNNGAYAACLSGAGPTVLVFAPRDVADTLQTSLQTLEIDADVLLLDVEGSGAEVFR</sequence>